<evidence type="ECO:0000255" key="1">
    <source>
        <dbReference type="HAMAP-Rule" id="MF_00041"/>
    </source>
</evidence>
<evidence type="ECO:0000305" key="2"/>
<reference key="1">
    <citation type="journal article" date="2005" name="Proc. Natl. Acad. Sci. U.S.A.">
        <title>The genome of Salinibacter ruber: convergence and gene exchange among hyperhalophilic bacteria and archaea.</title>
        <authorList>
            <person name="Mongodin E.F."/>
            <person name="Nelson K.E."/>
            <person name="Daugherty S."/>
            <person name="DeBoy R.T."/>
            <person name="Wister J."/>
            <person name="Khouri H."/>
            <person name="Weidman J."/>
            <person name="Walsh D.A."/>
            <person name="Papke R.T."/>
            <person name="Sanchez Perez G."/>
            <person name="Sharma A.K."/>
            <person name="Nesbo C.L."/>
            <person name="MacLeod D."/>
            <person name="Bapteste E."/>
            <person name="Doolittle W.F."/>
            <person name="Charlebois R.L."/>
            <person name="Legault B."/>
            <person name="Rodriguez-Valera F."/>
        </authorList>
    </citation>
    <scope>NUCLEOTIDE SEQUENCE [LARGE SCALE GENOMIC DNA]</scope>
    <source>
        <strain>DSM 13855 / CECT 5946 / M31</strain>
    </source>
</reference>
<name>SYC_SALRD</name>
<feature type="chain" id="PRO_0000240952" description="Cysteine--tRNA ligase">
    <location>
        <begin position="1"/>
        <end position="516"/>
    </location>
</feature>
<feature type="short sequence motif" description="'HIGH' region">
    <location>
        <begin position="34"/>
        <end position="44"/>
    </location>
</feature>
<feature type="short sequence motif" description="'KMSKS' region">
    <location>
        <begin position="287"/>
        <end position="291"/>
    </location>
</feature>
<feature type="binding site" evidence="1">
    <location>
        <position position="32"/>
    </location>
    <ligand>
        <name>Zn(2+)</name>
        <dbReference type="ChEBI" id="CHEBI:29105"/>
    </ligand>
</feature>
<feature type="binding site" evidence="1">
    <location>
        <position position="230"/>
    </location>
    <ligand>
        <name>Zn(2+)</name>
        <dbReference type="ChEBI" id="CHEBI:29105"/>
    </ligand>
</feature>
<feature type="binding site" evidence="1">
    <location>
        <position position="255"/>
    </location>
    <ligand>
        <name>Zn(2+)</name>
        <dbReference type="ChEBI" id="CHEBI:29105"/>
    </ligand>
</feature>
<feature type="binding site" evidence="1">
    <location>
        <position position="259"/>
    </location>
    <ligand>
        <name>Zn(2+)</name>
        <dbReference type="ChEBI" id="CHEBI:29105"/>
    </ligand>
</feature>
<feature type="binding site" evidence="1">
    <location>
        <position position="290"/>
    </location>
    <ligand>
        <name>ATP</name>
        <dbReference type="ChEBI" id="CHEBI:30616"/>
    </ligand>
</feature>
<dbReference type="EC" id="6.1.1.16" evidence="1"/>
<dbReference type="EMBL" id="CP000159">
    <property type="protein sequence ID" value="ABC44844.1"/>
    <property type="status" value="ALT_INIT"/>
    <property type="molecule type" value="Genomic_DNA"/>
</dbReference>
<dbReference type="RefSeq" id="WP_237701980.1">
    <property type="nucleotide sequence ID" value="NC_007677.1"/>
</dbReference>
<dbReference type="RefSeq" id="YP_445146.1">
    <property type="nucleotide sequence ID" value="NC_007677.1"/>
</dbReference>
<dbReference type="SMR" id="Q2S3T5"/>
<dbReference type="STRING" id="309807.SRU_1014"/>
<dbReference type="EnsemblBacteria" id="ABC44844">
    <property type="protein sequence ID" value="ABC44844"/>
    <property type="gene ID" value="SRU_1014"/>
</dbReference>
<dbReference type="GeneID" id="83727942"/>
<dbReference type="KEGG" id="sru:SRU_1014"/>
<dbReference type="PATRIC" id="fig|309807.25.peg.1051"/>
<dbReference type="eggNOG" id="COG0215">
    <property type="taxonomic scope" value="Bacteria"/>
</dbReference>
<dbReference type="HOGENOM" id="CLU_013528_0_1_10"/>
<dbReference type="OrthoDB" id="9815130at2"/>
<dbReference type="Proteomes" id="UP000008674">
    <property type="component" value="Chromosome"/>
</dbReference>
<dbReference type="GO" id="GO:0005829">
    <property type="term" value="C:cytosol"/>
    <property type="evidence" value="ECO:0007669"/>
    <property type="project" value="TreeGrafter"/>
</dbReference>
<dbReference type="GO" id="GO:0005524">
    <property type="term" value="F:ATP binding"/>
    <property type="evidence" value="ECO:0007669"/>
    <property type="project" value="UniProtKB-UniRule"/>
</dbReference>
<dbReference type="GO" id="GO:0004817">
    <property type="term" value="F:cysteine-tRNA ligase activity"/>
    <property type="evidence" value="ECO:0007669"/>
    <property type="project" value="UniProtKB-UniRule"/>
</dbReference>
<dbReference type="GO" id="GO:0008270">
    <property type="term" value="F:zinc ion binding"/>
    <property type="evidence" value="ECO:0007669"/>
    <property type="project" value="UniProtKB-UniRule"/>
</dbReference>
<dbReference type="GO" id="GO:0006423">
    <property type="term" value="P:cysteinyl-tRNA aminoacylation"/>
    <property type="evidence" value="ECO:0007669"/>
    <property type="project" value="UniProtKB-UniRule"/>
</dbReference>
<dbReference type="CDD" id="cd00672">
    <property type="entry name" value="CysRS_core"/>
    <property type="match status" value="1"/>
</dbReference>
<dbReference type="Gene3D" id="1.20.120.1910">
    <property type="entry name" value="Cysteine-tRNA ligase, C-terminal anti-codon recognition domain"/>
    <property type="match status" value="1"/>
</dbReference>
<dbReference type="Gene3D" id="3.40.50.620">
    <property type="entry name" value="HUPs"/>
    <property type="match status" value="1"/>
</dbReference>
<dbReference type="HAMAP" id="MF_00041">
    <property type="entry name" value="Cys_tRNA_synth"/>
    <property type="match status" value="1"/>
</dbReference>
<dbReference type="InterPro" id="IPR015803">
    <property type="entry name" value="Cys-tRNA-ligase"/>
</dbReference>
<dbReference type="InterPro" id="IPR015273">
    <property type="entry name" value="Cys-tRNA-synt_Ia_DALR"/>
</dbReference>
<dbReference type="InterPro" id="IPR024909">
    <property type="entry name" value="Cys-tRNA/MSH_ligase"/>
</dbReference>
<dbReference type="InterPro" id="IPR056411">
    <property type="entry name" value="CysS_C"/>
</dbReference>
<dbReference type="InterPro" id="IPR014729">
    <property type="entry name" value="Rossmann-like_a/b/a_fold"/>
</dbReference>
<dbReference type="InterPro" id="IPR032678">
    <property type="entry name" value="tRNA-synt_1_cat_dom"/>
</dbReference>
<dbReference type="InterPro" id="IPR009080">
    <property type="entry name" value="tRNAsynth_Ia_anticodon-bd"/>
</dbReference>
<dbReference type="NCBIfam" id="TIGR00435">
    <property type="entry name" value="cysS"/>
    <property type="match status" value="1"/>
</dbReference>
<dbReference type="PANTHER" id="PTHR10890:SF3">
    <property type="entry name" value="CYSTEINE--TRNA LIGASE, CYTOPLASMIC"/>
    <property type="match status" value="1"/>
</dbReference>
<dbReference type="PANTHER" id="PTHR10890">
    <property type="entry name" value="CYSTEINYL-TRNA SYNTHETASE"/>
    <property type="match status" value="1"/>
</dbReference>
<dbReference type="Pfam" id="PF23493">
    <property type="entry name" value="CysS_C"/>
    <property type="match status" value="1"/>
</dbReference>
<dbReference type="Pfam" id="PF09190">
    <property type="entry name" value="DALR_2"/>
    <property type="match status" value="1"/>
</dbReference>
<dbReference type="Pfam" id="PF01406">
    <property type="entry name" value="tRNA-synt_1e"/>
    <property type="match status" value="1"/>
</dbReference>
<dbReference type="PRINTS" id="PR00983">
    <property type="entry name" value="TRNASYNTHCYS"/>
</dbReference>
<dbReference type="SMART" id="SM00840">
    <property type="entry name" value="DALR_2"/>
    <property type="match status" value="1"/>
</dbReference>
<dbReference type="SUPFAM" id="SSF47323">
    <property type="entry name" value="Anticodon-binding domain of a subclass of class I aminoacyl-tRNA synthetases"/>
    <property type="match status" value="1"/>
</dbReference>
<dbReference type="SUPFAM" id="SSF52374">
    <property type="entry name" value="Nucleotidylyl transferase"/>
    <property type="match status" value="1"/>
</dbReference>
<keyword id="KW-0030">Aminoacyl-tRNA synthetase</keyword>
<keyword id="KW-0067">ATP-binding</keyword>
<keyword id="KW-0963">Cytoplasm</keyword>
<keyword id="KW-0436">Ligase</keyword>
<keyword id="KW-0479">Metal-binding</keyword>
<keyword id="KW-0547">Nucleotide-binding</keyword>
<keyword id="KW-0648">Protein biosynthesis</keyword>
<keyword id="KW-1185">Reference proteome</keyword>
<keyword id="KW-0862">Zinc</keyword>
<accession>Q2S3T5</accession>
<gene>
    <name evidence="1" type="primary">cysS</name>
    <name type="ordered locus">SRU_1014</name>
</gene>
<proteinExistence type="inferred from homology"/>
<comment type="catalytic activity">
    <reaction evidence="1">
        <text>tRNA(Cys) + L-cysteine + ATP = L-cysteinyl-tRNA(Cys) + AMP + diphosphate</text>
        <dbReference type="Rhea" id="RHEA:17773"/>
        <dbReference type="Rhea" id="RHEA-COMP:9661"/>
        <dbReference type="Rhea" id="RHEA-COMP:9679"/>
        <dbReference type="ChEBI" id="CHEBI:30616"/>
        <dbReference type="ChEBI" id="CHEBI:33019"/>
        <dbReference type="ChEBI" id="CHEBI:35235"/>
        <dbReference type="ChEBI" id="CHEBI:78442"/>
        <dbReference type="ChEBI" id="CHEBI:78517"/>
        <dbReference type="ChEBI" id="CHEBI:456215"/>
        <dbReference type="EC" id="6.1.1.16"/>
    </reaction>
</comment>
<comment type="cofactor">
    <cofactor evidence="1">
        <name>Zn(2+)</name>
        <dbReference type="ChEBI" id="CHEBI:29105"/>
    </cofactor>
    <text evidence="1">Binds 1 zinc ion per subunit.</text>
</comment>
<comment type="subunit">
    <text evidence="1">Monomer.</text>
</comment>
<comment type="subcellular location">
    <subcellularLocation>
        <location evidence="1">Cytoplasm</location>
    </subcellularLocation>
</comment>
<comment type="similarity">
    <text evidence="1">Belongs to the class-I aminoacyl-tRNA synthetase family.</text>
</comment>
<comment type="sequence caution" evidence="2">
    <conflict type="erroneous initiation">
        <sequence resource="EMBL-CDS" id="ABC44844"/>
    </conflict>
</comment>
<sequence>MPSPTFRLYNTLTHETEPVEPIEEEHLRFYSCGPTVYMYAHIGNFRSFLTADLIRRTAEAIGWDVTNVSNITDVGHLTQDDLVDPGGEDKMQRALEREGERFANIYDLARHYTEAFLEDWGALNLREPEVRPRATEHVTDQLEAVIELVEKEHAYTTDQGVYFSVESVEDYGHLSGNTEAQQLQATERDVVEDPDKRDPRDFALWKHDPQHLMHWHSPWGWGYPGWHIECSVMGMQYLGDRFDLHTGGEDLIFPHHECEIAQNQSLAGHQVVNYWVHTRFLQVEGEKMSKSKGNFYTVRDLIAPGPDDDHVPDSVREQGGVDPLALRYALMQGQYRKPFNFTLDTLHTAARHVRRYQDAAERVDAALAADADGPDELGGRLRPIYDRTLEAMCDDLNTPAATAAALDGVKAIEQTDRLNGATARSARNWLDRTNALLGVVEPEHEADQRTDAGSENGLAPAHLSDSIDTLLEDREAARADGEYARADAIRDTLEALGIEVMDTPDGTEWERREQVG</sequence>
<protein>
    <recommendedName>
        <fullName evidence="1">Cysteine--tRNA ligase</fullName>
        <ecNumber evidence="1">6.1.1.16</ecNumber>
    </recommendedName>
    <alternativeName>
        <fullName evidence="1">Cysteinyl-tRNA synthetase</fullName>
        <shortName evidence="1">CysRS</shortName>
    </alternativeName>
</protein>
<organism>
    <name type="scientific">Salinibacter ruber (strain DSM 13855 / M31)</name>
    <dbReference type="NCBI Taxonomy" id="309807"/>
    <lineage>
        <taxon>Bacteria</taxon>
        <taxon>Pseudomonadati</taxon>
        <taxon>Rhodothermota</taxon>
        <taxon>Rhodothermia</taxon>
        <taxon>Rhodothermales</taxon>
        <taxon>Salinibacteraceae</taxon>
        <taxon>Salinibacter</taxon>
    </lineage>
</organism>